<sequence>FIGGIISLIKKLF</sequence>
<name>GRA2A_POGPU</name>
<evidence type="ECO:0000250" key="1"/>
<evidence type="ECO:0000269" key="2">
    <source ref="1"/>
</evidence>
<evidence type="ECO:0000305" key="3"/>
<proteinExistence type="evidence at protein level"/>
<dbReference type="GO" id="GO:0005576">
    <property type="term" value="C:extracellular region"/>
    <property type="evidence" value="ECO:0007669"/>
    <property type="project" value="UniProtKB-SubCell"/>
</dbReference>
<dbReference type="GO" id="GO:0042742">
    <property type="term" value="P:defense response to bacterium"/>
    <property type="evidence" value="ECO:0007669"/>
    <property type="project" value="UniProtKB-KW"/>
</dbReference>
<dbReference type="GO" id="GO:0031640">
    <property type="term" value="P:killing of cells of another organism"/>
    <property type="evidence" value="ECO:0007669"/>
    <property type="project" value="UniProtKB-KW"/>
</dbReference>
<feature type="peptide" id="PRO_0000044526" description="Grammistin Pp 2a">
    <location>
        <begin position="1"/>
        <end position="13"/>
    </location>
</feature>
<protein>
    <recommendedName>
        <fullName>Grammistin Pp 2a</fullName>
    </recommendedName>
</protein>
<accession>P69843</accession>
<comment type="function">
    <text evidence="1">Has lytic, hemolytic and antibacterial activities.</text>
</comment>
<comment type="subcellular location">
    <subcellularLocation>
        <location>Secreted</location>
    </subcellularLocation>
</comment>
<comment type="tissue specificity">
    <text>Expressed by the skin glands.</text>
</comment>
<comment type="mass spectrometry"/>
<comment type="similarity">
    <text evidence="3">Belongs to the grammistin family. Group 2 subfamily.</text>
</comment>
<reference key="1">
    <citation type="journal article" date="2001" name="Fish. Sci.">
        <title>Primary and secondary structures of grammistins, peptide toxins isolated from the skin secretion of the soapfish Pogonoperca punctata.</title>
        <authorList>
            <person name="Shiomi K."/>
            <person name="Yokota H."/>
            <person name="Nagashima Y."/>
            <person name="Ishida M."/>
        </authorList>
    </citation>
    <scope>PROTEIN SEQUENCE</scope>
    <scope>MASS SPECTROMETRY</scope>
    <source>
        <tissue>Skin secretion</tissue>
    </source>
</reference>
<keyword id="KW-0044">Antibiotic</keyword>
<keyword id="KW-0929">Antimicrobial</keyword>
<keyword id="KW-0204">Cytolysis</keyword>
<keyword id="KW-0903">Direct protein sequencing</keyword>
<keyword id="KW-0354">Hemolysis</keyword>
<keyword id="KW-0964">Secreted</keyword>
<organism>
    <name type="scientific">Pogonoperca punctata</name>
    <name type="common">Clown grouper</name>
    <name type="synonym">Grammistes punctatus</name>
    <dbReference type="NCBI Taxonomy" id="160738"/>
    <lineage>
        <taxon>Eukaryota</taxon>
        <taxon>Metazoa</taxon>
        <taxon>Chordata</taxon>
        <taxon>Craniata</taxon>
        <taxon>Vertebrata</taxon>
        <taxon>Euteleostomi</taxon>
        <taxon>Actinopterygii</taxon>
        <taxon>Neopterygii</taxon>
        <taxon>Teleostei</taxon>
        <taxon>Neoteleostei</taxon>
        <taxon>Acanthomorphata</taxon>
        <taxon>Eupercaria</taxon>
        <taxon>Perciformes</taxon>
        <taxon>Serranoidei</taxon>
        <taxon>Serranidae</taxon>
        <taxon>Epinephelinae</taxon>
        <taxon>Grammistini</taxon>
        <taxon>Pogonoperca</taxon>
    </lineage>
</organism>